<dbReference type="EC" id="6.1.1.23" evidence="1"/>
<dbReference type="EMBL" id="CP001191">
    <property type="protein sequence ID" value="ACI54398.1"/>
    <property type="molecule type" value="Genomic_DNA"/>
</dbReference>
<dbReference type="RefSeq" id="WP_003587451.1">
    <property type="nucleotide sequence ID" value="NC_011369.1"/>
</dbReference>
<dbReference type="SMR" id="B5ZX21"/>
<dbReference type="STRING" id="395492.Rleg2_1104"/>
<dbReference type="KEGG" id="rlt:Rleg2_1104"/>
<dbReference type="eggNOG" id="COG0173">
    <property type="taxonomic scope" value="Bacteria"/>
</dbReference>
<dbReference type="HOGENOM" id="CLU_014330_3_2_5"/>
<dbReference type="Proteomes" id="UP000008330">
    <property type="component" value="Chromosome"/>
</dbReference>
<dbReference type="GO" id="GO:0005737">
    <property type="term" value="C:cytoplasm"/>
    <property type="evidence" value="ECO:0007669"/>
    <property type="project" value="UniProtKB-SubCell"/>
</dbReference>
<dbReference type="GO" id="GO:0004815">
    <property type="term" value="F:aspartate-tRNA ligase activity"/>
    <property type="evidence" value="ECO:0007669"/>
    <property type="project" value="UniProtKB-UniRule"/>
</dbReference>
<dbReference type="GO" id="GO:0050560">
    <property type="term" value="F:aspartate-tRNA(Asn) ligase activity"/>
    <property type="evidence" value="ECO:0007669"/>
    <property type="project" value="UniProtKB-EC"/>
</dbReference>
<dbReference type="GO" id="GO:0005524">
    <property type="term" value="F:ATP binding"/>
    <property type="evidence" value="ECO:0007669"/>
    <property type="project" value="UniProtKB-UniRule"/>
</dbReference>
<dbReference type="GO" id="GO:0003676">
    <property type="term" value="F:nucleic acid binding"/>
    <property type="evidence" value="ECO:0007669"/>
    <property type="project" value="InterPro"/>
</dbReference>
<dbReference type="GO" id="GO:0006422">
    <property type="term" value="P:aspartyl-tRNA aminoacylation"/>
    <property type="evidence" value="ECO:0007669"/>
    <property type="project" value="UniProtKB-UniRule"/>
</dbReference>
<dbReference type="CDD" id="cd00777">
    <property type="entry name" value="AspRS_core"/>
    <property type="match status" value="1"/>
</dbReference>
<dbReference type="CDD" id="cd04317">
    <property type="entry name" value="EcAspRS_like_N"/>
    <property type="match status" value="1"/>
</dbReference>
<dbReference type="Gene3D" id="3.30.930.10">
    <property type="entry name" value="Bira Bifunctional Protein, Domain 2"/>
    <property type="match status" value="1"/>
</dbReference>
<dbReference type="Gene3D" id="3.30.1360.30">
    <property type="entry name" value="GAD-like domain"/>
    <property type="match status" value="1"/>
</dbReference>
<dbReference type="Gene3D" id="2.40.50.140">
    <property type="entry name" value="Nucleic acid-binding proteins"/>
    <property type="match status" value="1"/>
</dbReference>
<dbReference type="HAMAP" id="MF_00044">
    <property type="entry name" value="Asp_tRNA_synth_type1"/>
    <property type="match status" value="1"/>
</dbReference>
<dbReference type="InterPro" id="IPR004364">
    <property type="entry name" value="Aa-tRNA-synt_II"/>
</dbReference>
<dbReference type="InterPro" id="IPR006195">
    <property type="entry name" value="aa-tRNA-synth_II"/>
</dbReference>
<dbReference type="InterPro" id="IPR045864">
    <property type="entry name" value="aa-tRNA-synth_II/BPL/LPL"/>
</dbReference>
<dbReference type="InterPro" id="IPR004524">
    <property type="entry name" value="Asp-tRNA-ligase_1"/>
</dbReference>
<dbReference type="InterPro" id="IPR047089">
    <property type="entry name" value="Asp-tRNA-ligase_1_N"/>
</dbReference>
<dbReference type="InterPro" id="IPR002312">
    <property type="entry name" value="Asp/Asn-tRNA-synth_IIb"/>
</dbReference>
<dbReference type="InterPro" id="IPR047090">
    <property type="entry name" value="AspRS_core"/>
</dbReference>
<dbReference type="InterPro" id="IPR004115">
    <property type="entry name" value="GAD-like_sf"/>
</dbReference>
<dbReference type="InterPro" id="IPR029351">
    <property type="entry name" value="GAD_dom"/>
</dbReference>
<dbReference type="InterPro" id="IPR012340">
    <property type="entry name" value="NA-bd_OB-fold"/>
</dbReference>
<dbReference type="InterPro" id="IPR004365">
    <property type="entry name" value="NA-bd_OB_tRNA"/>
</dbReference>
<dbReference type="NCBIfam" id="TIGR00459">
    <property type="entry name" value="aspS_bact"/>
    <property type="match status" value="1"/>
</dbReference>
<dbReference type="NCBIfam" id="NF001750">
    <property type="entry name" value="PRK00476.1"/>
    <property type="match status" value="1"/>
</dbReference>
<dbReference type="PANTHER" id="PTHR22594:SF5">
    <property type="entry name" value="ASPARTATE--TRNA LIGASE, MITOCHONDRIAL"/>
    <property type="match status" value="1"/>
</dbReference>
<dbReference type="PANTHER" id="PTHR22594">
    <property type="entry name" value="ASPARTYL/LYSYL-TRNA SYNTHETASE"/>
    <property type="match status" value="1"/>
</dbReference>
<dbReference type="Pfam" id="PF02938">
    <property type="entry name" value="GAD"/>
    <property type="match status" value="1"/>
</dbReference>
<dbReference type="Pfam" id="PF00152">
    <property type="entry name" value="tRNA-synt_2"/>
    <property type="match status" value="1"/>
</dbReference>
<dbReference type="Pfam" id="PF01336">
    <property type="entry name" value="tRNA_anti-codon"/>
    <property type="match status" value="1"/>
</dbReference>
<dbReference type="PRINTS" id="PR01042">
    <property type="entry name" value="TRNASYNTHASP"/>
</dbReference>
<dbReference type="SUPFAM" id="SSF55681">
    <property type="entry name" value="Class II aaRS and biotin synthetases"/>
    <property type="match status" value="1"/>
</dbReference>
<dbReference type="SUPFAM" id="SSF55261">
    <property type="entry name" value="GAD domain-like"/>
    <property type="match status" value="1"/>
</dbReference>
<dbReference type="SUPFAM" id="SSF50249">
    <property type="entry name" value="Nucleic acid-binding proteins"/>
    <property type="match status" value="1"/>
</dbReference>
<dbReference type="PROSITE" id="PS50862">
    <property type="entry name" value="AA_TRNA_LIGASE_II"/>
    <property type="match status" value="1"/>
</dbReference>
<protein>
    <recommendedName>
        <fullName evidence="1">Aspartate--tRNA(Asp/Asn) ligase</fullName>
        <ecNumber evidence="1">6.1.1.23</ecNumber>
    </recommendedName>
    <alternativeName>
        <fullName evidence="1">Aspartyl-tRNA synthetase</fullName>
        <shortName evidence="1">AspRS</shortName>
    </alternativeName>
    <alternativeName>
        <fullName evidence="1">Non-discriminating aspartyl-tRNA synthetase</fullName>
        <shortName evidence="1">ND-AspRS</shortName>
    </alternativeName>
</protein>
<feature type="chain" id="PRO_1000091030" description="Aspartate--tRNA(Asp/Asn) ligase">
    <location>
        <begin position="1"/>
        <end position="596"/>
    </location>
</feature>
<feature type="region of interest" description="Aspartate" evidence="1">
    <location>
        <begin position="199"/>
        <end position="202"/>
    </location>
</feature>
<feature type="binding site" evidence="1">
    <location>
        <position position="175"/>
    </location>
    <ligand>
        <name>L-aspartate</name>
        <dbReference type="ChEBI" id="CHEBI:29991"/>
    </ligand>
</feature>
<feature type="binding site" evidence="1">
    <location>
        <begin position="221"/>
        <end position="223"/>
    </location>
    <ligand>
        <name>ATP</name>
        <dbReference type="ChEBI" id="CHEBI:30616"/>
    </ligand>
</feature>
<feature type="binding site" evidence="1">
    <location>
        <position position="221"/>
    </location>
    <ligand>
        <name>L-aspartate</name>
        <dbReference type="ChEBI" id="CHEBI:29991"/>
    </ligand>
</feature>
<feature type="binding site" evidence="1">
    <location>
        <position position="454"/>
    </location>
    <ligand>
        <name>L-aspartate</name>
        <dbReference type="ChEBI" id="CHEBI:29991"/>
    </ligand>
</feature>
<feature type="binding site" evidence="1">
    <location>
        <position position="488"/>
    </location>
    <ligand>
        <name>ATP</name>
        <dbReference type="ChEBI" id="CHEBI:30616"/>
    </ligand>
</feature>
<feature type="binding site" evidence="1">
    <location>
        <position position="495"/>
    </location>
    <ligand>
        <name>L-aspartate</name>
        <dbReference type="ChEBI" id="CHEBI:29991"/>
    </ligand>
</feature>
<feature type="binding site" evidence="1">
    <location>
        <begin position="540"/>
        <end position="543"/>
    </location>
    <ligand>
        <name>ATP</name>
        <dbReference type="ChEBI" id="CHEBI:30616"/>
    </ligand>
</feature>
<feature type="site" description="Important for tRNA non-discrimination" evidence="1">
    <location>
        <position position="33"/>
    </location>
</feature>
<keyword id="KW-0030">Aminoacyl-tRNA synthetase</keyword>
<keyword id="KW-0067">ATP-binding</keyword>
<keyword id="KW-0963">Cytoplasm</keyword>
<keyword id="KW-0436">Ligase</keyword>
<keyword id="KW-0547">Nucleotide-binding</keyword>
<keyword id="KW-0648">Protein biosynthesis</keyword>
<keyword id="KW-1185">Reference proteome</keyword>
<evidence type="ECO:0000255" key="1">
    <source>
        <dbReference type="HAMAP-Rule" id="MF_00044"/>
    </source>
</evidence>
<reference key="1">
    <citation type="journal article" date="2010" name="Stand. Genomic Sci.">
        <title>Complete genome sequence of Rhizobium leguminosarum bv trifolii strain WSM2304, an effective microsymbiont of the South American clover Trifolium polymorphum.</title>
        <authorList>
            <person name="Reeve W."/>
            <person name="O'Hara G."/>
            <person name="Chain P."/>
            <person name="Ardley J."/>
            <person name="Brau L."/>
            <person name="Nandesena K."/>
            <person name="Tiwari R."/>
            <person name="Malfatti S."/>
            <person name="Kiss H."/>
            <person name="Lapidus A."/>
            <person name="Copeland A."/>
            <person name="Nolan M."/>
            <person name="Land M."/>
            <person name="Ivanova N."/>
            <person name="Mavromatis K."/>
            <person name="Markowitz V."/>
            <person name="Kyrpides N."/>
            <person name="Melino V."/>
            <person name="Denton M."/>
            <person name="Yates R."/>
            <person name="Howieson J."/>
        </authorList>
    </citation>
    <scope>NUCLEOTIDE SEQUENCE [LARGE SCALE GENOMIC DNA]</scope>
    <source>
        <strain>WSM2304</strain>
    </source>
</reference>
<comment type="function">
    <text evidence="1">Aspartyl-tRNA synthetase with relaxed tRNA specificity since it is able to aspartylate not only its cognate tRNA(Asp) but also tRNA(Asn). Reaction proceeds in two steps: L-aspartate is first activated by ATP to form Asp-AMP and then transferred to the acceptor end of tRNA(Asp/Asn).</text>
</comment>
<comment type="catalytic activity">
    <reaction evidence="1">
        <text>tRNA(Asx) + L-aspartate + ATP = L-aspartyl-tRNA(Asx) + AMP + diphosphate</text>
        <dbReference type="Rhea" id="RHEA:18349"/>
        <dbReference type="Rhea" id="RHEA-COMP:9710"/>
        <dbReference type="Rhea" id="RHEA-COMP:9711"/>
        <dbReference type="ChEBI" id="CHEBI:29991"/>
        <dbReference type="ChEBI" id="CHEBI:30616"/>
        <dbReference type="ChEBI" id="CHEBI:33019"/>
        <dbReference type="ChEBI" id="CHEBI:78442"/>
        <dbReference type="ChEBI" id="CHEBI:78516"/>
        <dbReference type="ChEBI" id="CHEBI:456215"/>
        <dbReference type="EC" id="6.1.1.23"/>
    </reaction>
</comment>
<comment type="subunit">
    <text evidence="1">Homodimer.</text>
</comment>
<comment type="subcellular location">
    <subcellularLocation>
        <location evidence="1">Cytoplasm</location>
    </subcellularLocation>
</comment>
<comment type="similarity">
    <text evidence="1">Belongs to the class-II aminoacyl-tRNA synthetase family. Type 1 subfamily.</text>
</comment>
<accession>B5ZX21</accession>
<name>SYDND_RHILW</name>
<sequence length="596" mass="66934">MHRYRSHTCAALRKTDVGSTVRISGWVHRVRDHGGVLFIDLRDHYGITQVVADPDSPAFKMAETVRGEWVIRIDGLVKARTEDTVNKAMATGEIELYAQEIEVLSAAKELPLPVFGEPDYPEDVRLKYRFLDLRRETLHKNIVKRTQVISAMRREMGNVGFTEYTTPILTASSPEGARDFLVPSRIHPGTFYALPQAPQQYKQLLMVAGFDRYFQIAPCFRDEDPRADRLPGEFYQLDLEMSFVTQEDVWDTMGPLMTSVFEEFAEGKPVTKEWPRIPYDEAIRKYGSDKPDLRNPIVMEAVTEHFAGSGFKVFAGMIASNPKVQIWAIPAKTGGSRAFCDRMNAWAQSQGQPGLGYIFWRSENDKLEGAGPLAKNIGEERTDAIRTQLGLGDGDACFFVAGEPEKFYKFAGEARTKAGEELNLVDRDRFELCWIVDFPFFEWSEEDKKVDFAHNPFSMPQGGLDALQNQDPLTIKAFQYDAVCNGFEIASGSIRNQSPETMVAAFEKVGLSQQDVEDRFGGLYRAFQYGAPPHGGAAFGIDRIVMLLVGAKNLREISVFPMNQQAQDLLMGAPSPATPTQLRELSIRPIPPVKKD</sequence>
<gene>
    <name evidence="1" type="primary">aspS</name>
    <name type="ordered locus">Rleg2_1104</name>
</gene>
<proteinExistence type="inferred from homology"/>
<organism>
    <name type="scientific">Rhizobium leguminosarum bv. trifolii (strain WSM2304)</name>
    <dbReference type="NCBI Taxonomy" id="395492"/>
    <lineage>
        <taxon>Bacteria</taxon>
        <taxon>Pseudomonadati</taxon>
        <taxon>Pseudomonadota</taxon>
        <taxon>Alphaproteobacteria</taxon>
        <taxon>Hyphomicrobiales</taxon>
        <taxon>Rhizobiaceae</taxon>
        <taxon>Rhizobium/Agrobacterium group</taxon>
        <taxon>Rhizobium</taxon>
    </lineage>
</organism>